<gene>
    <name evidence="2" type="primary">argF</name>
    <name type="ordered locus">NE1438</name>
</gene>
<protein>
    <recommendedName>
        <fullName evidence="2">Ornithine carbamoyltransferase</fullName>
        <shortName evidence="2">OTCase</shortName>
        <ecNumber evidence="2">2.1.3.3</ecNumber>
    </recommendedName>
</protein>
<sequence length="307" mass="35518">MQIRHFLQFKDFDRQEYEYLFDRTRWIKNEFKQYRRYWPLTDRTLAMIFEKHSTRTRLSFEAGMHQLGGSAIYLSTRDTQLGRGEPVEDAARVISRMVDIITLRTHEHGVIERFAENSRVPVINGLTDEYHPCQILADIFTFMEHRGSIAGKTVAWIGDSNNVCNTWLQAAEVFDFNVHVSTPPGYEVEPERAGLYGTDHYEQFVSPHDAVKDADLVTTDVWTSMGFEDEADTRKNDFADFRVDAEMMACAKEEALFMHCLPAHRGEEVDAEVIDGPQSVVWDEAENRLHTQKALMEYLLLGRIGVR</sequence>
<keyword id="KW-0028">Amino-acid biosynthesis</keyword>
<keyword id="KW-0055">Arginine biosynthesis</keyword>
<keyword id="KW-0963">Cytoplasm</keyword>
<keyword id="KW-1185">Reference proteome</keyword>
<keyword id="KW-0808">Transferase</keyword>
<comment type="function">
    <text evidence="1">Reversibly catalyzes the transfer of the carbamoyl group from carbamoyl phosphate (CP) to the N(epsilon) atom of ornithine (ORN) to produce L-citrulline.</text>
</comment>
<comment type="catalytic activity">
    <reaction evidence="2">
        <text>carbamoyl phosphate + L-ornithine = L-citrulline + phosphate + H(+)</text>
        <dbReference type="Rhea" id="RHEA:19513"/>
        <dbReference type="ChEBI" id="CHEBI:15378"/>
        <dbReference type="ChEBI" id="CHEBI:43474"/>
        <dbReference type="ChEBI" id="CHEBI:46911"/>
        <dbReference type="ChEBI" id="CHEBI:57743"/>
        <dbReference type="ChEBI" id="CHEBI:58228"/>
        <dbReference type="EC" id="2.1.3.3"/>
    </reaction>
</comment>
<comment type="pathway">
    <text evidence="2">Amino-acid biosynthesis; L-arginine biosynthesis; L-arginine from L-ornithine and carbamoyl phosphate: step 1/3.</text>
</comment>
<comment type="subcellular location">
    <subcellularLocation>
        <location evidence="2">Cytoplasm</location>
    </subcellularLocation>
</comment>
<comment type="similarity">
    <text evidence="2">Belongs to the aspartate/ornithine carbamoyltransferase superfamily. OTCase family.</text>
</comment>
<evidence type="ECO:0000250" key="1"/>
<evidence type="ECO:0000255" key="2">
    <source>
        <dbReference type="HAMAP-Rule" id="MF_01109"/>
    </source>
</evidence>
<proteinExistence type="inferred from homology"/>
<organism>
    <name type="scientific">Nitrosomonas europaea (strain ATCC 19718 / CIP 103999 / KCTC 2705 / NBRC 14298)</name>
    <dbReference type="NCBI Taxonomy" id="228410"/>
    <lineage>
        <taxon>Bacteria</taxon>
        <taxon>Pseudomonadati</taxon>
        <taxon>Pseudomonadota</taxon>
        <taxon>Betaproteobacteria</taxon>
        <taxon>Nitrosomonadales</taxon>
        <taxon>Nitrosomonadaceae</taxon>
        <taxon>Nitrosomonas</taxon>
    </lineage>
</organism>
<name>OTC_NITEU</name>
<reference key="1">
    <citation type="journal article" date="2003" name="J. Bacteriol.">
        <title>Complete genome sequence of the ammonia-oxidizing bacterium and obligate chemolithoautotroph Nitrosomonas europaea.</title>
        <authorList>
            <person name="Chain P."/>
            <person name="Lamerdin J.E."/>
            <person name="Larimer F.W."/>
            <person name="Regala W."/>
            <person name="Lao V."/>
            <person name="Land M.L."/>
            <person name="Hauser L."/>
            <person name="Hooper A.B."/>
            <person name="Klotz M.G."/>
            <person name="Norton J."/>
            <person name="Sayavedra-Soto L.A."/>
            <person name="Arciero D.M."/>
            <person name="Hommes N.G."/>
            <person name="Whittaker M.M."/>
            <person name="Arp D.J."/>
        </authorList>
    </citation>
    <scope>NUCLEOTIDE SEQUENCE [LARGE SCALE GENOMIC DNA]</scope>
    <source>
        <strain>ATCC 19718 / CIP 103999 / KCTC 2705 / NBRC 14298</strain>
    </source>
</reference>
<dbReference type="EC" id="2.1.3.3" evidence="2"/>
<dbReference type="EMBL" id="AL954747">
    <property type="protein sequence ID" value="CAD85349.1"/>
    <property type="molecule type" value="Genomic_DNA"/>
</dbReference>
<dbReference type="RefSeq" id="WP_011112006.1">
    <property type="nucleotide sequence ID" value="NC_004757.1"/>
</dbReference>
<dbReference type="SMR" id="Q82UP4"/>
<dbReference type="STRING" id="228410.NE1438"/>
<dbReference type="GeneID" id="87104612"/>
<dbReference type="KEGG" id="neu:NE1438"/>
<dbReference type="eggNOG" id="COG0078">
    <property type="taxonomic scope" value="Bacteria"/>
</dbReference>
<dbReference type="HOGENOM" id="CLU_043846_3_2_4"/>
<dbReference type="OrthoDB" id="9802587at2"/>
<dbReference type="PhylomeDB" id="Q82UP4"/>
<dbReference type="UniPathway" id="UPA00068">
    <property type="reaction ID" value="UER00112"/>
</dbReference>
<dbReference type="Proteomes" id="UP000001416">
    <property type="component" value="Chromosome"/>
</dbReference>
<dbReference type="GO" id="GO:0005737">
    <property type="term" value="C:cytoplasm"/>
    <property type="evidence" value="ECO:0007669"/>
    <property type="project" value="UniProtKB-SubCell"/>
</dbReference>
<dbReference type="GO" id="GO:0016597">
    <property type="term" value="F:amino acid binding"/>
    <property type="evidence" value="ECO:0007669"/>
    <property type="project" value="InterPro"/>
</dbReference>
<dbReference type="GO" id="GO:0004585">
    <property type="term" value="F:ornithine carbamoyltransferase activity"/>
    <property type="evidence" value="ECO:0007669"/>
    <property type="project" value="UniProtKB-UniRule"/>
</dbReference>
<dbReference type="GO" id="GO:0042450">
    <property type="term" value="P:arginine biosynthetic process via ornithine"/>
    <property type="evidence" value="ECO:0007669"/>
    <property type="project" value="TreeGrafter"/>
</dbReference>
<dbReference type="GO" id="GO:0019240">
    <property type="term" value="P:citrulline biosynthetic process"/>
    <property type="evidence" value="ECO:0007669"/>
    <property type="project" value="TreeGrafter"/>
</dbReference>
<dbReference type="GO" id="GO:0006526">
    <property type="term" value="P:L-arginine biosynthetic process"/>
    <property type="evidence" value="ECO:0007669"/>
    <property type="project" value="UniProtKB-UniRule"/>
</dbReference>
<dbReference type="FunFam" id="3.40.50.1370:FF:000008">
    <property type="entry name" value="Ornithine carbamoyltransferase"/>
    <property type="match status" value="1"/>
</dbReference>
<dbReference type="Gene3D" id="3.40.50.1370">
    <property type="entry name" value="Aspartate/ornithine carbamoyltransferase"/>
    <property type="match status" value="2"/>
</dbReference>
<dbReference type="HAMAP" id="MF_01109">
    <property type="entry name" value="OTCase"/>
    <property type="match status" value="1"/>
</dbReference>
<dbReference type="InterPro" id="IPR006132">
    <property type="entry name" value="Asp/Orn_carbamoyltranf_P-bd"/>
</dbReference>
<dbReference type="InterPro" id="IPR006130">
    <property type="entry name" value="Asp/Orn_carbamoylTrfase"/>
</dbReference>
<dbReference type="InterPro" id="IPR036901">
    <property type="entry name" value="Asp/Orn_carbamoylTrfase_sf"/>
</dbReference>
<dbReference type="InterPro" id="IPR006131">
    <property type="entry name" value="Asp_carbamoyltransf_Asp/Orn-bd"/>
</dbReference>
<dbReference type="InterPro" id="IPR002292">
    <property type="entry name" value="Orn/put_carbamltrans"/>
</dbReference>
<dbReference type="InterPro" id="IPR024904">
    <property type="entry name" value="OTCase_ArgI"/>
</dbReference>
<dbReference type="NCBIfam" id="TIGR00658">
    <property type="entry name" value="orni_carb_tr"/>
    <property type="match status" value="1"/>
</dbReference>
<dbReference type="NCBIfam" id="NF001986">
    <property type="entry name" value="PRK00779.1"/>
    <property type="match status" value="1"/>
</dbReference>
<dbReference type="PANTHER" id="PTHR45753">
    <property type="entry name" value="ORNITHINE CARBAMOYLTRANSFERASE, MITOCHONDRIAL"/>
    <property type="match status" value="1"/>
</dbReference>
<dbReference type="PANTHER" id="PTHR45753:SF3">
    <property type="entry name" value="ORNITHINE TRANSCARBAMYLASE, MITOCHONDRIAL"/>
    <property type="match status" value="1"/>
</dbReference>
<dbReference type="Pfam" id="PF00185">
    <property type="entry name" value="OTCace"/>
    <property type="match status" value="1"/>
</dbReference>
<dbReference type="Pfam" id="PF02729">
    <property type="entry name" value="OTCace_N"/>
    <property type="match status" value="1"/>
</dbReference>
<dbReference type="PRINTS" id="PR00100">
    <property type="entry name" value="AOTCASE"/>
</dbReference>
<dbReference type="PRINTS" id="PR00102">
    <property type="entry name" value="OTCASE"/>
</dbReference>
<dbReference type="SUPFAM" id="SSF53671">
    <property type="entry name" value="Aspartate/ornithine carbamoyltransferase"/>
    <property type="match status" value="1"/>
</dbReference>
<dbReference type="PROSITE" id="PS00097">
    <property type="entry name" value="CARBAMOYLTRANSFERASE"/>
    <property type="match status" value="1"/>
</dbReference>
<feature type="chain" id="PRO_0000112973" description="Ornithine carbamoyltransferase">
    <location>
        <begin position="1"/>
        <end position="307"/>
    </location>
</feature>
<feature type="binding site" evidence="2">
    <location>
        <begin position="53"/>
        <end position="56"/>
    </location>
    <ligand>
        <name>carbamoyl phosphate</name>
        <dbReference type="ChEBI" id="CHEBI:58228"/>
    </ligand>
</feature>
<feature type="binding site" evidence="2">
    <location>
        <position position="80"/>
    </location>
    <ligand>
        <name>carbamoyl phosphate</name>
        <dbReference type="ChEBI" id="CHEBI:58228"/>
    </ligand>
</feature>
<feature type="binding site" evidence="2">
    <location>
        <position position="104"/>
    </location>
    <ligand>
        <name>carbamoyl phosphate</name>
        <dbReference type="ChEBI" id="CHEBI:58228"/>
    </ligand>
</feature>
<feature type="binding site" evidence="2">
    <location>
        <begin position="131"/>
        <end position="134"/>
    </location>
    <ligand>
        <name>carbamoyl phosphate</name>
        <dbReference type="ChEBI" id="CHEBI:58228"/>
    </ligand>
</feature>
<feature type="binding site" evidence="2">
    <location>
        <position position="162"/>
    </location>
    <ligand>
        <name>L-ornithine</name>
        <dbReference type="ChEBI" id="CHEBI:46911"/>
    </ligand>
</feature>
<feature type="binding site" evidence="2">
    <location>
        <position position="220"/>
    </location>
    <ligand>
        <name>L-ornithine</name>
        <dbReference type="ChEBI" id="CHEBI:46911"/>
    </ligand>
</feature>
<feature type="binding site" evidence="2">
    <location>
        <begin position="224"/>
        <end position="225"/>
    </location>
    <ligand>
        <name>L-ornithine</name>
        <dbReference type="ChEBI" id="CHEBI:46911"/>
    </ligand>
</feature>
<feature type="binding site" evidence="2">
    <location>
        <begin position="260"/>
        <end position="261"/>
    </location>
    <ligand>
        <name>carbamoyl phosphate</name>
        <dbReference type="ChEBI" id="CHEBI:58228"/>
    </ligand>
</feature>
<feature type="binding site" evidence="2">
    <location>
        <position position="288"/>
    </location>
    <ligand>
        <name>carbamoyl phosphate</name>
        <dbReference type="ChEBI" id="CHEBI:58228"/>
    </ligand>
</feature>
<accession>Q82UP4</accession>